<dbReference type="EC" id="4.2.1.17" evidence="1"/>
<dbReference type="EC" id="5.1.2.3" evidence="1"/>
<dbReference type="EC" id="1.1.1.35" evidence="1"/>
<dbReference type="EMBL" id="CP000308">
    <property type="protein sequence ID" value="ABG14062.1"/>
    <property type="status" value="ALT_INIT"/>
    <property type="molecule type" value="Genomic_DNA"/>
</dbReference>
<dbReference type="SMR" id="Q1C660"/>
<dbReference type="KEGG" id="ypa:YPA_2097"/>
<dbReference type="UniPathway" id="UPA00659"/>
<dbReference type="Proteomes" id="UP000001971">
    <property type="component" value="Chromosome"/>
</dbReference>
<dbReference type="GO" id="GO:0005737">
    <property type="term" value="C:cytoplasm"/>
    <property type="evidence" value="ECO:0007669"/>
    <property type="project" value="UniProtKB-SubCell"/>
</dbReference>
<dbReference type="GO" id="GO:0008692">
    <property type="term" value="F:3-hydroxybutyryl-CoA epimerase activity"/>
    <property type="evidence" value="ECO:0007669"/>
    <property type="project" value="UniProtKB-UniRule"/>
</dbReference>
<dbReference type="GO" id="GO:0004300">
    <property type="term" value="F:enoyl-CoA hydratase activity"/>
    <property type="evidence" value="ECO:0007669"/>
    <property type="project" value="UniProtKB-UniRule"/>
</dbReference>
<dbReference type="GO" id="GO:0016509">
    <property type="term" value="F:long-chain-3-hydroxyacyl-CoA dehydrogenase activity"/>
    <property type="evidence" value="ECO:0007669"/>
    <property type="project" value="TreeGrafter"/>
</dbReference>
<dbReference type="GO" id="GO:0070403">
    <property type="term" value="F:NAD+ binding"/>
    <property type="evidence" value="ECO:0007669"/>
    <property type="project" value="InterPro"/>
</dbReference>
<dbReference type="GO" id="GO:0006635">
    <property type="term" value="P:fatty acid beta-oxidation"/>
    <property type="evidence" value="ECO:0007669"/>
    <property type="project" value="UniProtKB-UniRule"/>
</dbReference>
<dbReference type="CDD" id="cd06558">
    <property type="entry name" value="crotonase-like"/>
    <property type="match status" value="1"/>
</dbReference>
<dbReference type="FunFam" id="1.10.1040.50:FF:000003">
    <property type="entry name" value="Fatty acid oxidation complex subunit alpha"/>
    <property type="match status" value="1"/>
</dbReference>
<dbReference type="FunFam" id="3.90.226.10:FF:000011">
    <property type="entry name" value="Fatty acid oxidation complex subunit alpha"/>
    <property type="match status" value="1"/>
</dbReference>
<dbReference type="FunFam" id="3.40.50.720:FF:000009">
    <property type="entry name" value="Fatty oxidation complex, alpha subunit"/>
    <property type="match status" value="1"/>
</dbReference>
<dbReference type="Gene3D" id="1.10.1040.50">
    <property type="match status" value="1"/>
</dbReference>
<dbReference type="Gene3D" id="3.90.226.10">
    <property type="entry name" value="2-enoyl-CoA Hydratase, Chain A, domain 1"/>
    <property type="match status" value="1"/>
</dbReference>
<dbReference type="Gene3D" id="3.40.50.720">
    <property type="entry name" value="NAD(P)-binding Rossmann-like Domain"/>
    <property type="match status" value="1"/>
</dbReference>
<dbReference type="HAMAP" id="MF_01617">
    <property type="entry name" value="FadJ"/>
    <property type="match status" value="1"/>
</dbReference>
<dbReference type="InterPro" id="IPR006180">
    <property type="entry name" value="3-OHacyl-CoA_DH_CS"/>
</dbReference>
<dbReference type="InterPro" id="IPR006176">
    <property type="entry name" value="3-OHacyl-CoA_DH_NAD-bd"/>
</dbReference>
<dbReference type="InterPro" id="IPR006108">
    <property type="entry name" value="3HC_DH_C"/>
</dbReference>
<dbReference type="InterPro" id="IPR008927">
    <property type="entry name" value="6-PGluconate_DH-like_C_sf"/>
</dbReference>
<dbReference type="InterPro" id="IPR029045">
    <property type="entry name" value="ClpP/crotonase-like_dom_sf"/>
</dbReference>
<dbReference type="InterPro" id="IPR001753">
    <property type="entry name" value="Enoyl-CoA_hydra/iso"/>
</dbReference>
<dbReference type="InterPro" id="IPR050136">
    <property type="entry name" value="FA_oxidation_alpha_subunit"/>
</dbReference>
<dbReference type="InterPro" id="IPR012802">
    <property type="entry name" value="FadJ"/>
</dbReference>
<dbReference type="InterPro" id="IPR036291">
    <property type="entry name" value="NAD(P)-bd_dom_sf"/>
</dbReference>
<dbReference type="NCBIfam" id="TIGR02440">
    <property type="entry name" value="FadJ"/>
    <property type="match status" value="1"/>
</dbReference>
<dbReference type="NCBIfam" id="NF008363">
    <property type="entry name" value="PRK11154.1"/>
    <property type="match status" value="1"/>
</dbReference>
<dbReference type="PANTHER" id="PTHR43612">
    <property type="entry name" value="TRIFUNCTIONAL ENZYME SUBUNIT ALPHA"/>
    <property type="match status" value="1"/>
</dbReference>
<dbReference type="PANTHER" id="PTHR43612:SF3">
    <property type="entry name" value="TRIFUNCTIONAL ENZYME SUBUNIT ALPHA, MITOCHONDRIAL"/>
    <property type="match status" value="1"/>
</dbReference>
<dbReference type="Pfam" id="PF00725">
    <property type="entry name" value="3HCDH"/>
    <property type="match status" value="2"/>
</dbReference>
<dbReference type="Pfam" id="PF02737">
    <property type="entry name" value="3HCDH_N"/>
    <property type="match status" value="1"/>
</dbReference>
<dbReference type="Pfam" id="PF00378">
    <property type="entry name" value="ECH_1"/>
    <property type="match status" value="1"/>
</dbReference>
<dbReference type="SUPFAM" id="SSF48179">
    <property type="entry name" value="6-phosphogluconate dehydrogenase C-terminal domain-like"/>
    <property type="match status" value="2"/>
</dbReference>
<dbReference type="SUPFAM" id="SSF52096">
    <property type="entry name" value="ClpP/crotonase"/>
    <property type="match status" value="1"/>
</dbReference>
<dbReference type="SUPFAM" id="SSF51735">
    <property type="entry name" value="NAD(P)-binding Rossmann-fold domains"/>
    <property type="match status" value="1"/>
</dbReference>
<dbReference type="PROSITE" id="PS00067">
    <property type="entry name" value="3HCDH"/>
    <property type="match status" value="1"/>
</dbReference>
<organism>
    <name type="scientific">Yersinia pestis bv. Antiqua (strain Antiqua)</name>
    <dbReference type="NCBI Taxonomy" id="360102"/>
    <lineage>
        <taxon>Bacteria</taxon>
        <taxon>Pseudomonadati</taxon>
        <taxon>Pseudomonadota</taxon>
        <taxon>Gammaproteobacteria</taxon>
        <taxon>Enterobacterales</taxon>
        <taxon>Yersiniaceae</taxon>
        <taxon>Yersinia</taxon>
    </lineage>
</organism>
<accession>Q1C660</accession>
<name>FADJ_YERPA</name>
<protein>
    <recommendedName>
        <fullName evidence="1">Fatty acid oxidation complex subunit alpha</fullName>
    </recommendedName>
    <domain>
        <recommendedName>
            <fullName evidence="1">Enoyl-CoA hydratase/3-hydroxybutyryl-CoA epimerase</fullName>
            <ecNumber evidence="1">4.2.1.17</ecNumber>
            <ecNumber evidence="1">5.1.2.3</ecNumber>
        </recommendedName>
    </domain>
    <domain>
        <recommendedName>
            <fullName evidence="1">3-hydroxyacyl-CoA dehydrogenase</fullName>
            <ecNumber evidence="1">1.1.1.35</ecNumber>
        </recommendedName>
    </domain>
</protein>
<feature type="chain" id="PRO_0000273990" description="Fatty acid oxidation complex subunit alpha">
    <location>
        <begin position="1"/>
        <end position="747"/>
    </location>
</feature>
<feature type="region of interest" description="Enoyl-CoA hydratase" evidence="1">
    <location>
        <begin position="8"/>
        <end position="197"/>
    </location>
</feature>
<feature type="region of interest" description="3-hydroxyacyl-CoA dehydrogenase" evidence="1">
    <location>
        <begin position="313"/>
        <end position="741"/>
    </location>
</feature>
<feature type="region of interest" description="Disordered" evidence="2">
    <location>
        <begin position="590"/>
        <end position="614"/>
    </location>
</feature>
<feature type="compositionally biased region" description="Polar residues" evidence="2">
    <location>
        <begin position="593"/>
        <end position="610"/>
    </location>
</feature>
<feature type="site" description="Important for catalytic activity" evidence="1">
    <location>
        <position position="125"/>
    </location>
</feature>
<feature type="site" description="Important for catalytic activity" evidence="1">
    <location>
        <position position="147"/>
    </location>
</feature>
<reference key="1">
    <citation type="journal article" date="2006" name="J. Bacteriol.">
        <title>Complete genome sequence of Yersinia pestis strains Antiqua and Nepal516: evidence of gene reduction in an emerging pathogen.</title>
        <authorList>
            <person name="Chain P.S.G."/>
            <person name="Hu P."/>
            <person name="Malfatti S.A."/>
            <person name="Radnedge L."/>
            <person name="Larimer F."/>
            <person name="Vergez L.M."/>
            <person name="Worsham P."/>
            <person name="Chu M.C."/>
            <person name="Andersen G.L."/>
        </authorList>
    </citation>
    <scope>NUCLEOTIDE SEQUENCE [LARGE SCALE GENOMIC DNA]</scope>
    <source>
        <strain>Antiqua</strain>
    </source>
</reference>
<evidence type="ECO:0000255" key="1">
    <source>
        <dbReference type="HAMAP-Rule" id="MF_01617"/>
    </source>
</evidence>
<evidence type="ECO:0000256" key="2">
    <source>
        <dbReference type="SAM" id="MobiDB-lite"/>
    </source>
</evidence>
<evidence type="ECO:0000305" key="3"/>
<comment type="function">
    <text evidence="1">Catalyzes the formation of a hydroxyacyl-CoA by addition of water on enoyl-CoA. Also exhibits 3-hydroxyacyl-CoA epimerase and 3-hydroxyacyl-CoA dehydrogenase activities.</text>
</comment>
<comment type="catalytic activity">
    <reaction evidence="1">
        <text>a (3S)-3-hydroxyacyl-CoA = a (2E)-enoyl-CoA + H2O</text>
        <dbReference type="Rhea" id="RHEA:16105"/>
        <dbReference type="ChEBI" id="CHEBI:15377"/>
        <dbReference type="ChEBI" id="CHEBI:57318"/>
        <dbReference type="ChEBI" id="CHEBI:58856"/>
        <dbReference type="EC" id="4.2.1.17"/>
    </reaction>
</comment>
<comment type="catalytic activity">
    <reaction evidence="1">
        <text>a 4-saturated-(3S)-3-hydroxyacyl-CoA = a (3E)-enoyl-CoA + H2O</text>
        <dbReference type="Rhea" id="RHEA:20724"/>
        <dbReference type="ChEBI" id="CHEBI:15377"/>
        <dbReference type="ChEBI" id="CHEBI:58521"/>
        <dbReference type="ChEBI" id="CHEBI:137480"/>
        <dbReference type="EC" id="4.2.1.17"/>
    </reaction>
</comment>
<comment type="catalytic activity">
    <reaction evidence="1">
        <text>a (3S)-3-hydroxyacyl-CoA + NAD(+) = a 3-oxoacyl-CoA + NADH + H(+)</text>
        <dbReference type="Rhea" id="RHEA:22432"/>
        <dbReference type="ChEBI" id="CHEBI:15378"/>
        <dbReference type="ChEBI" id="CHEBI:57318"/>
        <dbReference type="ChEBI" id="CHEBI:57540"/>
        <dbReference type="ChEBI" id="CHEBI:57945"/>
        <dbReference type="ChEBI" id="CHEBI:90726"/>
        <dbReference type="EC" id="1.1.1.35"/>
    </reaction>
</comment>
<comment type="catalytic activity">
    <reaction evidence="1">
        <text>(3S)-3-hydroxybutanoyl-CoA = (3R)-3-hydroxybutanoyl-CoA</text>
        <dbReference type="Rhea" id="RHEA:21760"/>
        <dbReference type="ChEBI" id="CHEBI:57315"/>
        <dbReference type="ChEBI" id="CHEBI:57316"/>
        <dbReference type="EC" id="5.1.2.3"/>
    </reaction>
</comment>
<comment type="pathway">
    <text evidence="1">Lipid metabolism; fatty acid beta-oxidation.</text>
</comment>
<comment type="subunit">
    <text evidence="1">Heterotetramer of two alpha chains (FadJ) and two beta chains (FadI).</text>
</comment>
<comment type="subcellular location">
    <subcellularLocation>
        <location evidence="1">Cytoplasm</location>
    </subcellularLocation>
</comment>
<comment type="similarity">
    <text evidence="1">In the N-terminal section; belongs to the enoyl-CoA hydratase/isomerase family.</text>
</comment>
<comment type="similarity">
    <text evidence="1">In the central section; belongs to the 3-hydroxyacyl-CoA dehydrogenase family.</text>
</comment>
<comment type="sequence caution" evidence="3">
    <conflict type="erroneous initiation">
        <sequence resource="EMBL-CDS" id="ABG14062"/>
    </conflict>
</comment>
<proteinExistence type="inferred from homology"/>
<keyword id="KW-0963">Cytoplasm</keyword>
<keyword id="KW-0276">Fatty acid metabolism</keyword>
<keyword id="KW-0413">Isomerase</keyword>
<keyword id="KW-0442">Lipid degradation</keyword>
<keyword id="KW-0443">Lipid metabolism</keyword>
<keyword id="KW-0456">Lyase</keyword>
<keyword id="KW-0511">Multifunctional enzyme</keyword>
<keyword id="KW-0520">NAD</keyword>
<keyword id="KW-0560">Oxidoreductase</keyword>
<gene>
    <name evidence="1" type="primary">fadJ</name>
    <name type="ordered locus">YPA_2097</name>
</gene>
<sequence length="747" mass="80695">MGASATNSVTHPAFTLNVRPDNIGIITIDVVGDKVNTLKAEFADQIATILQQAHALPKLQGLVIVSGKPDSFIAGADITMIAACRTAHDARVLAQKGQSILAQIAAFPVPVVAAIHGACLGGGLELALACHSRICSLDDKTVLGLPEVQLGLLPGSGGTQRLPRLVGVSKALDMILTGKQIRPRQALKMGLVDDVVPRDILLDVAIQRAKAGWLNRRALPWQERLLSGPLGKALLFRIVRKKTLAKTRGHYPAAERIIDVVRKGLDQGGPSGYEAEARAFGELAMSPQSAALRSLFFATTSLKKETGSAATARAIHRVGVLGGGLMGGGIANVTATRAGLPVRIKDINPQGINQALKYTWDALGKRVRSKRMRPTEQQRQMMLISGSTDYRGFERVDIVVEAVFEDLSLKQQMVADIERFGAAHTIFASNTSSLPISQIAALAQRPEQVIGLHYFSPVDKMPLVEVIPHEKTSEETIATTVALARKQGKTAIVVADRAGFYVNRILAPYINEAARCLLDGEPIESVDNALVDFGFPVGPMMLLDEVGIDVATKIMPILVEQLGPRFAAPPSFDVILKDGRKGRKNGRGFYLYSNPTKNSSPTKNGNSPAKRNSFKWRKNKVKPVDASIYTLLGVTPKAHLGAGVITQRCTMLMLNEAVRCLDESIIRNPRDGDIGAVFGIGFPPFLGGPFRYLDSLGADKVVQALRLLVQQYGERFEPCQRLVTMAEQQQQFYPVDANIDEVTDVAS</sequence>